<gene>
    <name evidence="1" type="primary">rsmJ</name>
    <name type="ordered locus">Patl_0354</name>
</gene>
<organism>
    <name type="scientific">Pseudoalteromonas atlantica (strain T6c / ATCC BAA-1087)</name>
    <dbReference type="NCBI Taxonomy" id="3042615"/>
    <lineage>
        <taxon>Bacteria</taxon>
        <taxon>Pseudomonadati</taxon>
        <taxon>Pseudomonadota</taxon>
        <taxon>Gammaproteobacteria</taxon>
        <taxon>Alteromonadales</taxon>
        <taxon>Alteromonadaceae</taxon>
        <taxon>Paraglaciecola</taxon>
    </lineage>
</organism>
<comment type="function">
    <text evidence="1">Specifically methylates the guanosine in position 1516 of 16S rRNA.</text>
</comment>
<comment type="catalytic activity">
    <reaction evidence="1">
        <text>guanosine(1516) in 16S rRNA + S-adenosyl-L-methionine = N(2)-methylguanosine(1516) in 16S rRNA + S-adenosyl-L-homocysteine + H(+)</text>
        <dbReference type="Rhea" id="RHEA:43220"/>
        <dbReference type="Rhea" id="RHEA-COMP:10412"/>
        <dbReference type="Rhea" id="RHEA-COMP:10413"/>
        <dbReference type="ChEBI" id="CHEBI:15378"/>
        <dbReference type="ChEBI" id="CHEBI:57856"/>
        <dbReference type="ChEBI" id="CHEBI:59789"/>
        <dbReference type="ChEBI" id="CHEBI:74269"/>
        <dbReference type="ChEBI" id="CHEBI:74481"/>
        <dbReference type="EC" id="2.1.1.242"/>
    </reaction>
</comment>
<comment type="subcellular location">
    <subcellularLocation>
        <location evidence="1">Cytoplasm</location>
    </subcellularLocation>
</comment>
<comment type="similarity">
    <text evidence="1">Belongs to the methyltransferase superfamily. RsmJ family.</text>
</comment>
<comment type="sequence caution" evidence="2">
    <conflict type="erroneous initiation">
        <sequence resource="EMBL-CDS" id="ABG38885"/>
    </conflict>
    <text>Extended N-terminus.</text>
</comment>
<accession>Q15Z03</accession>
<proteinExistence type="inferred from homology"/>
<protein>
    <recommendedName>
        <fullName evidence="1">Ribosomal RNA small subunit methyltransferase J</fullName>
        <ecNumber evidence="1">2.1.1.242</ecNumber>
    </recommendedName>
    <alternativeName>
        <fullName evidence="1">16S rRNA m2G1516 methyltransferase</fullName>
    </alternativeName>
    <alternativeName>
        <fullName evidence="1">rRNA (guanine-N(2)-)-methyltransferase</fullName>
    </alternativeName>
</protein>
<sequence>MAPVVTVPENASPELVEKAKNLASVWQLNFDGNVRHGLVLMQSEAHLALKQLDEPKVGEVLVDFASDALTFRRLHGGGKKEAVAKAVGLKGQSEWRVLDATAGLGRDAFVLASLGCRVDMIERSPVVAALLADGLERAHHSAELSAWLPQRMRLHHGIAVDLMANWCNEPANLAPDVVYLDPMFPHRKKSAAVKKEMRLFQQLLGPDEDADGLLAPALALAKKRVVVKRPAGAPFLAQQKPHIEMQGKANRFDVYLIN</sequence>
<evidence type="ECO:0000255" key="1">
    <source>
        <dbReference type="HAMAP-Rule" id="MF_01523"/>
    </source>
</evidence>
<evidence type="ECO:0000305" key="2"/>
<name>RSMJ_PSEA6</name>
<keyword id="KW-0963">Cytoplasm</keyword>
<keyword id="KW-0489">Methyltransferase</keyword>
<keyword id="KW-0698">rRNA processing</keyword>
<keyword id="KW-0949">S-adenosyl-L-methionine</keyword>
<keyword id="KW-0808">Transferase</keyword>
<dbReference type="EC" id="2.1.1.242" evidence="1"/>
<dbReference type="EMBL" id="CP000388">
    <property type="protein sequence ID" value="ABG38885.1"/>
    <property type="status" value="ALT_INIT"/>
    <property type="molecule type" value="Genomic_DNA"/>
</dbReference>
<dbReference type="RefSeq" id="WP_011573282.1">
    <property type="nucleotide sequence ID" value="NC_008228.1"/>
</dbReference>
<dbReference type="SMR" id="Q15Z03"/>
<dbReference type="STRING" id="342610.Patl_0354"/>
<dbReference type="KEGG" id="pat:Patl_0354"/>
<dbReference type="eggNOG" id="COG0742">
    <property type="taxonomic scope" value="Bacteria"/>
</dbReference>
<dbReference type="HOGENOM" id="CLU_076324_0_0_6"/>
<dbReference type="OrthoDB" id="3191794at2"/>
<dbReference type="Proteomes" id="UP000001981">
    <property type="component" value="Chromosome"/>
</dbReference>
<dbReference type="GO" id="GO:0005737">
    <property type="term" value="C:cytoplasm"/>
    <property type="evidence" value="ECO:0007669"/>
    <property type="project" value="UniProtKB-SubCell"/>
</dbReference>
<dbReference type="GO" id="GO:0008990">
    <property type="term" value="F:rRNA (guanine-N2-)-methyltransferase activity"/>
    <property type="evidence" value="ECO:0007669"/>
    <property type="project" value="UniProtKB-UniRule"/>
</dbReference>
<dbReference type="CDD" id="cd02440">
    <property type="entry name" value="AdoMet_MTases"/>
    <property type="match status" value="1"/>
</dbReference>
<dbReference type="Gene3D" id="3.40.50.150">
    <property type="entry name" value="Vaccinia Virus protein VP39"/>
    <property type="match status" value="1"/>
</dbReference>
<dbReference type="Gene3D" id="3.40.1630.10">
    <property type="entry name" value="YhiQ-like domain"/>
    <property type="match status" value="1"/>
</dbReference>
<dbReference type="HAMAP" id="MF_01523">
    <property type="entry name" value="16SrRNA_methyltr_J"/>
    <property type="match status" value="1"/>
</dbReference>
<dbReference type="InterPro" id="IPR007536">
    <property type="entry name" value="16SrRNA_methylTrfase_J"/>
</dbReference>
<dbReference type="InterPro" id="IPR029063">
    <property type="entry name" value="SAM-dependent_MTases_sf"/>
</dbReference>
<dbReference type="PANTHER" id="PTHR36112">
    <property type="entry name" value="RIBOSOMAL RNA SMALL SUBUNIT METHYLTRANSFERASE J"/>
    <property type="match status" value="1"/>
</dbReference>
<dbReference type="PANTHER" id="PTHR36112:SF1">
    <property type="entry name" value="RIBOSOMAL RNA SMALL SUBUNIT METHYLTRANSFERASE J"/>
    <property type="match status" value="1"/>
</dbReference>
<dbReference type="Pfam" id="PF04445">
    <property type="entry name" value="SAM_MT"/>
    <property type="match status" value="1"/>
</dbReference>
<dbReference type="SUPFAM" id="SSF53335">
    <property type="entry name" value="S-adenosyl-L-methionine-dependent methyltransferases"/>
    <property type="match status" value="1"/>
</dbReference>
<feature type="chain" id="PRO_0000292639" description="Ribosomal RNA small subunit methyltransferase J">
    <location>
        <begin position="1"/>
        <end position="258"/>
    </location>
</feature>
<feature type="binding site" evidence="1">
    <location>
        <begin position="106"/>
        <end position="107"/>
    </location>
    <ligand>
        <name>S-adenosyl-L-methionine</name>
        <dbReference type="ChEBI" id="CHEBI:59789"/>
    </ligand>
</feature>
<feature type="binding site" evidence="1">
    <location>
        <begin position="122"/>
        <end position="123"/>
    </location>
    <ligand>
        <name>S-adenosyl-L-methionine</name>
        <dbReference type="ChEBI" id="CHEBI:59789"/>
    </ligand>
</feature>
<feature type="binding site" evidence="1">
    <location>
        <position position="181"/>
    </location>
    <ligand>
        <name>S-adenosyl-L-methionine</name>
        <dbReference type="ChEBI" id="CHEBI:59789"/>
    </ligand>
</feature>
<reference key="1">
    <citation type="submission" date="2006-06" db="EMBL/GenBank/DDBJ databases">
        <title>Complete sequence of Pseudoalteromonas atlantica T6c.</title>
        <authorList>
            <consortium name="US DOE Joint Genome Institute"/>
            <person name="Copeland A."/>
            <person name="Lucas S."/>
            <person name="Lapidus A."/>
            <person name="Barry K."/>
            <person name="Detter J.C."/>
            <person name="Glavina del Rio T."/>
            <person name="Hammon N."/>
            <person name="Israni S."/>
            <person name="Dalin E."/>
            <person name="Tice H."/>
            <person name="Pitluck S."/>
            <person name="Saunders E."/>
            <person name="Brettin T."/>
            <person name="Bruce D."/>
            <person name="Han C."/>
            <person name="Tapia R."/>
            <person name="Gilna P."/>
            <person name="Schmutz J."/>
            <person name="Larimer F."/>
            <person name="Land M."/>
            <person name="Hauser L."/>
            <person name="Kyrpides N."/>
            <person name="Kim E."/>
            <person name="Karls A.C."/>
            <person name="Bartlett D."/>
            <person name="Higgins B.P."/>
            <person name="Richardson P."/>
        </authorList>
    </citation>
    <scope>NUCLEOTIDE SEQUENCE [LARGE SCALE GENOMIC DNA]</scope>
    <source>
        <strain>T6c / ATCC BAA-1087</strain>
    </source>
</reference>